<organism>
    <name type="scientific">Drosophila subobscura</name>
    <name type="common">Fruit fly</name>
    <dbReference type="NCBI Taxonomy" id="7241"/>
    <lineage>
        <taxon>Eukaryota</taxon>
        <taxon>Metazoa</taxon>
        <taxon>Ecdysozoa</taxon>
        <taxon>Arthropoda</taxon>
        <taxon>Hexapoda</taxon>
        <taxon>Insecta</taxon>
        <taxon>Pterygota</taxon>
        <taxon>Neoptera</taxon>
        <taxon>Endopterygota</taxon>
        <taxon>Diptera</taxon>
        <taxon>Brachycera</taxon>
        <taxon>Muscomorpha</taxon>
        <taxon>Ephydroidea</taxon>
        <taxon>Drosophilidae</taxon>
        <taxon>Drosophila</taxon>
        <taxon>Sophophora</taxon>
    </lineage>
</organism>
<feature type="chain" id="PRO_0000174313" description="LYR motif-containing protein 4 homolog">
    <location>
        <begin position="1"/>
        <end position="92"/>
    </location>
</feature>
<feature type="coiled-coil region" evidence="2">
    <location>
        <begin position="40"/>
        <end position="68"/>
    </location>
</feature>
<accession>P82116</accession>
<evidence type="ECO:0000250" key="1">
    <source>
        <dbReference type="UniProtKB" id="O46098"/>
    </source>
</evidence>
<evidence type="ECO:0000255" key="2"/>
<evidence type="ECO:0000305" key="3"/>
<gene>
    <name evidence="1" type="primary">bcn92</name>
</gene>
<reference evidence="3" key="1">
    <citation type="journal article" date="1995" name="Genetics">
        <title>Molecular characterization of the breakpoints of an inversion fixed between Drosophila melanogaster and D. subobscura.</title>
        <authorList>
            <person name="Cirera S."/>
            <person name="Martin-Campos J.M."/>
            <person name="Segarra C."/>
            <person name="Aguade M."/>
        </authorList>
    </citation>
    <scope>NUCLEOTIDE SEQUENCE [GENOMIC DNA]</scope>
</reference>
<dbReference type="EMBL" id="Z46522">
    <property type="protein sequence ID" value="CAB55311.1"/>
    <property type="molecule type" value="Genomic_DNA"/>
</dbReference>
<dbReference type="SMR" id="P82116"/>
<dbReference type="EnsemblMetazoa" id="XM_034815761.1">
    <property type="protein sequence ID" value="XP_034671652.1"/>
    <property type="gene ID" value="LOC117903557"/>
</dbReference>
<dbReference type="GO" id="GO:1990221">
    <property type="term" value="C:L-cysteine desulfurase complex"/>
    <property type="evidence" value="ECO:0007669"/>
    <property type="project" value="TreeGrafter"/>
</dbReference>
<dbReference type="GO" id="GO:0005739">
    <property type="term" value="C:mitochondrion"/>
    <property type="evidence" value="ECO:0007669"/>
    <property type="project" value="UniProtKB-SubCell"/>
</dbReference>
<dbReference type="GO" id="GO:0016226">
    <property type="term" value="P:iron-sulfur cluster assembly"/>
    <property type="evidence" value="ECO:0007669"/>
    <property type="project" value="InterPro"/>
</dbReference>
<dbReference type="CDD" id="cd20264">
    <property type="entry name" value="Complex1_LYR_LYRM4"/>
    <property type="match status" value="1"/>
</dbReference>
<dbReference type="InterPro" id="IPR008011">
    <property type="entry name" value="Complex1_LYR_dom"/>
</dbReference>
<dbReference type="InterPro" id="IPR045297">
    <property type="entry name" value="Complex1_LYR_LYRM4"/>
</dbReference>
<dbReference type="InterPro" id="IPR051522">
    <property type="entry name" value="ISC_assembly_LYR"/>
</dbReference>
<dbReference type="PANTHER" id="PTHR13166:SF7">
    <property type="entry name" value="LYR MOTIF-CONTAINING PROTEIN 4"/>
    <property type="match status" value="1"/>
</dbReference>
<dbReference type="PANTHER" id="PTHR13166">
    <property type="entry name" value="PROTEIN C6ORF149"/>
    <property type="match status" value="1"/>
</dbReference>
<dbReference type="Pfam" id="PF05347">
    <property type="entry name" value="Complex1_LYR"/>
    <property type="match status" value="1"/>
</dbReference>
<keyword id="KW-0175">Coiled coil</keyword>
<keyword id="KW-0496">Mitochondrion</keyword>
<sequence>MSTRRQAITLYRNLLRESEKLPAYNFRMYAVRKIRDAFRANKAIRDFAEIDRQMEAGKQNLELIRRQVIIGHLYTADKLVIENKKTLSPLDD</sequence>
<name>LYRM4_DROSU</name>
<comment type="function">
    <text evidence="1">Stabilizing factor of the core iron-sulfur cluster (ISC) assembly complex that regulates the stability and cysteine desulfurase activity of Nfs1 and participates in the [2Fe-2S] clusters assembly on the scaffolding protein IscU.</text>
</comment>
<comment type="subunit">
    <text evidence="1">Component of the mitochondrial core iron-sulfur cluster (ISC) assembly complex at least composed of the cysteine desulfurase Nfs1, the scaffold protein IscU, the accessory protein bcn92/Isd11/Lyrm4, and probably fh/frataxin (By similarity). Interacts with Nfs1 (By similarity).</text>
</comment>
<comment type="subcellular location">
    <subcellularLocation>
        <location evidence="1">Mitochondrion</location>
    </subcellularLocation>
</comment>
<comment type="similarity">
    <text evidence="3">Belongs to the complex I LYR family.</text>
</comment>
<proteinExistence type="inferred from homology"/>
<protein>
    <recommendedName>
        <fullName evidence="1">LYR motif-containing protein 4 homolog</fullName>
    </recommendedName>
    <alternativeName>
        <fullName>Protein bcn92</fullName>
    </alternativeName>
</protein>